<keyword id="KW-0010">Activator</keyword>
<keyword id="KW-0963">Cytoplasm</keyword>
<keyword id="KW-0903">Direct protein sequencing</keyword>
<keyword id="KW-0238">DNA-binding</keyword>
<keyword id="KW-0346">Stress response</keyword>
<keyword id="KW-0804">Transcription</keyword>
<keyword id="KW-0805">Transcription regulation</keyword>
<comment type="function">
    <text>Affects cell viability at low temperatures.</text>
</comment>
<comment type="subcellular location">
    <subcellularLocation>
        <location>Cytoplasm</location>
    </subcellularLocation>
</comment>
<comment type="induction">
    <text>In response to low temperature.</text>
</comment>
<proteinExistence type="evidence at protein level"/>
<dbReference type="EMBL" id="U62986">
    <property type="protein sequence ID" value="AAC45997.1"/>
    <property type="molecule type" value="Genomic_DNA"/>
</dbReference>
<dbReference type="RefSeq" id="WP_002554837.1">
    <property type="nucleotide sequence ID" value="NZ_SDUZ01000018.1"/>
</dbReference>
<dbReference type="SMR" id="P0A106"/>
<dbReference type="STRING" id="296.B6D87_05260"/>
<dbReference type="eggNOG" id="COG1278">
    <property type="taxonomic scope" value="Bacteria"/>
</dbReference>
<dbReference type="OrthoDB" id="9810590at2"/>
<dbReference type="GO" id="GO:0005829">
    <property type="term" value="C:cytosol"/>
    <property type="evidence" value="ECO:0007669"/>
    <property type="project" value="UniProtKB-ARBA"/>
</dbReference>
<dbReference type="GO" id="GO:0003677">
    <property type="term" value="F:DNA binding"/>
    <property type="evidence" value="ECO:0007669"/>
    <property type="project" value="UniProtKB-KW"/>
</dbReference>
<dbReference type="CDD" id="cd04458">
    <property type="entry name" value="CSP_CDS"/>
    <property type="match status" value="1"/>
</dbReference>
<dbReference type="FunFam" id="2.40.50.140:FF:000006">
    <property type="entry name" value="Cold shock protein CspC"/>
    <property type="match status" value="1"/>
</dbReference>
<dbReference type="Gene3D" id="2.40.50.140">
    <property type="entry name" value="Nucleic acid-binding proteins"/>
    <property type="match status" value="1"/>
</dbReference>
<dbReference type="InterPro" id="IPR012156">
    <property type="entry name" value="Cold_shock_CspA"/>
</dbReference>
<dbReference type="InterPro" id="IPR011129">
    <property type="entry name" value="CSD"/>
</dbReference>
<dbReference type="InterPro" id="IPR019844">
    <property type="entry name" value="CSD_CS"/>
</dbReference>
<dbReference type="InterPro" id="IPR002059">
    <property type="entry name" value="CSP_DNA-bd"/>
</dbReference>
<dbReference type="InterPro" id="IPR012340">
    <property type="entry name" value="NA-bd_OB-fold"/>
</dbReference>
<dbReference type="PANTHER" id="PTHR46565">
    <property type="entry name" value="COLD SHOCK DOMAIN PROTEIN 2"/>
    <property type="match status" value="1"/>
</dbReference>
<dbReference type="PANTHER" id="PTHR46565:SF20">
    <property type="entry name" value="COLD SHOCK DOMAIN-CONTAINING PROTEIN 4"/>
    <property type="match status" value="1"/>
</dbReference>
<dbReference type="Pfam" id="PF00313">
    <property type="entry name" value="CSD"/>
    <property type="match status" value="1"/>
</dbReference>
<dbReference type="PIRSF" id="PIRSF002599">
    <property type="entry name" value="Cold_shock_A"/>
    <property type="match status" value="1"/>
</dbReference>
<dbReference type="PRINTS" id="PR00050">
    <property type="entry name" value="COLDSHOCK"/>
</dbReference>
<dbReference type="SMART" id="SM00357">
    <property type="entry name" value="CSP"/>
    <property type="match status" value="1"/>
</dbReference>
<dbReference type="SUPFAM" id="SSF50249">
    <property type="entry name" value="Nucleic acid-binding proteins"/>
    <property type="match status" value="1"/>
</dbReference>
<dbReference type="PROSITE" id="PS00352">
    <property type="entry name" value="CSD_1"/>
    <property type="match status" value="1"/>
</dbReference>
<dbReference type="PROSITE" id="PS51857">
    <property type="entry name" value="CSD_2"/>
    <property type="match status" value="1"/>
</dbReference>
<name>CAPB_PSEFR</name>
<protein>
    <recommendedName>
        <fullName>Cold shock protein CapB</fullName>
    </recommendedName>
    <alternativeName>
        <fullName>C8.0</fullName>
    </alternativeName>
    <alternativeName>
        <fullName>Cold acclimation protein B</fullName>
    </alternativeName>
</protein>
<gene>
    <name type="primary">capB</name>
</gene>
<organism>
    <name type="scientific">Pseudomonas fragi</name>
    <dbReference type="NCBI Taxonomy" id="296"/>
    <lineage>
        <taxon>Bacteria</taxon>
        <taxon>Pseudomonadati</taxon>
        <taxon>Pseudomonadota</taxon>
        <taxon>Gammaproteobacteria</taxon>
        <taxon>Pseudomonadales</taxon>
        <taxon>Pseudomonadaceae</taxon>
        <taxon>Pseudomonas</taxon>
    </lineage>
</organism>
<feature type="chain" id="PRO_0000100318" description="Cold shock protein CapB">
    <location>
        <begin position="1"/>
        <end position="69"/>
    </location>
</feature>
<feature type="domain" description="CSD">
    <location>
        <begin position="7"/>
        <end position="66"/>
    </location>
</feature>
<feature type="sequence conflict" description="In Ref. 1; AA sequence." evidence="1" ref="1">
    <original>MSNR</original>
    <variation>MRND</variation>
    <location>
        <begin position="1"/>
        <end position="4"/>
    </location>
</feature>
<accession>P0A106</accession>
<accession>P72189</accession>
<accession>P80415</accession>
<evidence type="ECO:0000305" key="1"/>
<sequence>MSNRQTGTVKWFNDEKGFGFITPQSGDDLFVHFKAIQSDGFKSLKEGQQVSFIATRGQKGMQAEEVQVI</sequence>
<reference key="1">
    <citation type="submission" date="1995-01" db="UniProtKB">
        <authorList>
            <person name="Hebraud M."/>
            <person name="Anglade P."/>
            <person name="Molle D.J."/>
        </authorList>
    </citation>
    <scope>PROTEIN SEQUENCE</scope>
    <source>
        <strain>K1</strain>
    </source>
</reference>
<reference key="2">
    <citation type="journal article" date="1997" name="J. Bacteriol.">
        <title>The cold shock response of the psychrotrophic bacterium Pseudomonas fragi involves four low-molecular-mass nucleic acid-binding proteins.</title>
        <authorList>
            <person name="Michel V."/>
            <person name="Lehoux I."/>
            <person name="Depret G."/>
            <person name="Anglade P."/>
            <person name="Labadie J."/>
            <person name="Hebraud M."/>
        </authorList>
    </citation>
    <scope>NUCLEOTIDE SEQUENCE [GENOMIC DNA]</scope>
    <source>
        <strain>K1</strain>
    </source>
</reference>